<dbReference type="EC" id="2.1.1.181" evidence="1"/>
<dbReference type="EMBL" id="CP001657">
    <property type="protein sequence ID" value="ACT11695.1"/>
    <property type="molecule type" value="Genomic_DNA"/>
</dbReference>
<dbReference type="RefSeq" id="WP_012773342.1">
    <property type="nucleotide sequence ID" value="NC_012917.1"/>
</dbReference>
<dbReference type="SMR" id="C6D8Y7"/>
<dbReference type="STRING" id="561230.PC1_0640"/>
<dbReference type="KEGG" id="pct:PC1_0640"/>
<dbReference type="eggNOG" id="COG3129">
    <property type="taxonomic scope" value="Bacteria"/>
</dbReference>
<dbReference type="HOGENOM" id="CLU_027534_3_0_6"/>
<dbReference type="OrthoDB" id="1115728at2"/>
<dbReference type="Proteomes" id="UP000002736">
    <property type="component" value="Chromosome"/>
</dbReference>
<dbReference type="GO" id="GO:0005737">
    <property type="term" value="C:cytoplasm"/>
    <property type="evidence" value="ECO:0007669"/>
    <property type="project" value="UniProtKB-SubCell"/>
</dbReference>
<dbReference type="GO" id="GO:0052907">
    <property type="term" value="F:23S rRNA (adenine(1618)-N(6))-methyltransferase activity"/>
    <property type="evidence" value="ECO:0007669"/>
    <property type="project" value="UniProtKB-EC"/>
</dbReference>
<dbReference type="GO" id="GO:0070475">
    <property type="term" value="P:rRNA base methylation"/>
    <property type="evidence" value="ECO:0007669"/>
    <property type="project" value="TreeGrafter"/>
</dbReference>
<dbReference type="CDD" id="cd02440">
    <property type="entry name" value="AdoMet_MTases"/>
    <property type="match status" value="1"/>
</dbReference>
<dbReference type="FunFam" id="3.40.50.150:FF:000045">
    <property type="entry name" value="Ribosomal RNA large subunit methyltransferase F"/>
    <property type="match status" value="1"/>
</dbReference>
<dbReference type="Gene3D" id="3.40.50.150">
    <property type="entry name" value="Vaccinia Virus protein VP39"/>
    <property type="match status" value="1"/>
</dbReference>
<dbReference type="HAMAP" id="MF_01848">
    <property type="entry name" value="23SrRNA_methyltr_F"/>
    <property type="match status" value="1"/>
</dbReference>
<dbReference type="InterPro" id="IPR010286">
    <property type="entry name" value="METTL16/RlmF"/>
</dbReference>
<dbReference type="InterPro" id="IPR016909">
    <property type="entry name" value="rRNA_lsu_MeTfrase_F"/>
</dbReference>
<dbReference type="InterPro" id="IPR029063">
    <property type="entry name" value="SAM-dependent_MTases_sf"/>
</dbReference>
<dbReference type="NCBIfam" id="NF008725">
    <property type="entry name" value="PRK11727.1"/>
    <property type="match status" value="1"/>
</dbReference>
<dbReference type="PANTHER" id="PTHR13393:SF0">
    <property type="entry name" value="RNA N6-ADENOSINE-METHYLTRANSFERASE METTL16"/>
    <property type="match status" value="1"/>
</dbReference>
<dbReference type="PANTHER" id="PTHR13393">
    <property type="entry name" value="SAM-DEPENDENT METHYLTRANSFERASE"/>
    <property type="match status" value="1"/>
</dbReference>
<dbReference type="Pfam" id="PF05971">
    <property type="entry name" value="Methyltransf_10"/>
    <property type="match status" value="1"/>
</dbReference>
<dbReference type="PIRSF" id="PIRSF029038">
    <property type="entry name" value="Mtase_YbiN_prd"/>
    <property type="match status" value="1"/>
</dbReference>
<dbReference type="SUPFAM" id="SSF53335">
    <property type="entry name" value="S-adenosyl-L-methionine-dependent methyltransferases"/>
    <property type="match status" value="1"/>
</dbReference>
<proteinExistence type="inferred from homology"/>
<accession>C6D8Y7</accession>
<gene>
    <name evidence="1" type="primary">rlmF</name>
    <name type="ordered locus">PC1_0640</name>
</gene>
<organism>
    <name type="scientific">Pectobacterium carotovorum subsp. carotovorum (strain PC1)</name>
    <dbReference type="NCBI Taxonomy" id="561230"/>
    <lineage>
        <taxon>Bacteria</taxon>
        <taxon>Pseudomonadati</taxon>
        <taxon>Pseudomonadota</taxon>
        <taxon>Gammaproteobacteria</taxon>
        <taxon>Enterobacterales</taxon>
        <taxon>Pectobacteriaceae</taxon>
        <taxon>Pectobacterium</taxon>
    </lineage>
</organism>
<name>RLMF_PECCP</name>
<feature type="chain" id="PRO_1000216112" description="Ribosomal RNA large subunit methyltransferase F">
    <location>
        <begin position="1"/>
        <end position="311"/>
    </location>
</feature>
<evidence type="ECO:0000255" key="1">
    <source>
        <dbReference type="HAMAP-Rule" id="MF_01848"/>
    </source>
</evidence>
<protein>
    <recommendedName>
        <fullName evidence="1">Ribosomal RNA large subunit methyltransferase F</fullName>
        <ecNumber evidence="1">2.1.1.181</ecNumber>
    </recommendedName>
    <alternativeName>
        <fullName evidence="1">23S rRNA mA1618 methyltransferase</fullName>
    </alternativeName>
    <alternativeName>
        <fullName evidence="1">rRNA adenine N-6-methyltransferase</fullName>
    </alternativeName>
</protein>
<sequence>MTKPAVQKNGLHPRNRHRDRYDFPTLKHSYPALIPFVTVNAYGDESVDFANPEAVKTLNQALLQHFYQIEHWEIPDGFLCPPIPGRADYIHHLADLLAEDNRAVVPREASVLDIGCGANCIYPLIGYREYGWRFTGSEINPIAMKAANQTIEANPGLNRAIRLRRQKSSTAILAGIIHKNETFDAVMCNPPFHASAEDARQGSQRKLHNLGLDKRSPLNFGGQQDELWCEGGESAFIGQMIKESAGFARQCLWFTSLVSRKENLPEIYRALEAVDAEKVRTIDMAQGQKQSRFVAWSFLDTAARTRWLQKR</sequence>
<comment type="function">
    <text evidence="1">Specifically methylates the adenine in position 1618 of 23S rRNA.</text>
</comment>
<comment type="catalytic activity">
    <reaction evidence="1">
        <text>adenosine(1618) in 23S rRNA + S-adenosyl-L-methionine = N(6)-methyladenosine(1618) in 23S rRNA + S-adenosyl-L-homocysteine + H(+)</text>
        <dbReference type="Rhea" id="RHEA:16497"/>
        <dbReference type="Rhea" id="RHEA-COMP:10229"/>
        <dbReference type="Rhea" id="RHEA-COMP:10231"/>
        <dbReference type="ChEBI" id="CHEBI:15378"/>
        <dbReference type="ChEBI" id="CHEBI:57856"/>
        <dbReference type="ChEBI" id="CHEBI:59789"/>
        <dbReference type="ChEBI" id="CHEBI:74411"/>
        <dbReference type="ChEBI" id="CHEBI:74449"/>
        <dbReference type="EC" id="2.1.1.181"/>
    </reaction>
</comment>
<comment type="subcellular location">
    <subcellularLocation>
        <location evidence="1">Cytoplasm</location>
    </subcellularLocation>
</comment>
<comment type="similarity">
    <text evidence="1">Belongs to the methyltransferase superfamily. METTL16/RlmF family.</text>
</comment>
<reference key="1">
    <citation type="submission" date="2009-07" db="EMBL/GenBank/DDBJ databases">
        <title>Complete sequence of Pectobacterium carotovorum subsp. carotovorum PC1.</title>
        <authorList>
            <consortium name="US DOE Joint Genome Institute"/>
            <person name="Lucas S."/>
            <person name="Copeland A."/>
            <person name="Lapidus A."/>
            <person name="Glavina del Rio T."/>
            <person name="Tice H."/>
            <person name="Bruce D."/>
            <person name="Goodwin L."/>
            <person name="Pitluck S."/>
            <person name="Munk A.C."/>
            <person name="Brettin T."/>
            <person name="Detter J.C."/>
            <person name="Han C."/>
            <person name="Tapia R."/>
            <person name="Larimer F."/>
            <person name="Land M."/>
            <person name="Hauser L."/>
            <person name="Kyrpides N."/>
            <person name="Mikhailova N."/>
            <person name="Balakrishnan V."/>
            <person name="Glasner J."/>
            <person name="Perna N.T."/>
        </authorList>
    </citation>
    <scope>NUCLEOTIDE SEQUENCE [LARGE SCALE GENOMIC DNA]</scope>
    <source>
        <strain>PC1</strain>
    </source>
</reference>
<keyword id="KW-0963">Cytoplasm</keyword>
<keyword id="KW-0489">Methyltransferase</keyword>
<keyword id="KW-0698">rRNA processing</keyword>
<keyword id="KW-0949">S-adenosyl-L-methionine</keyword>
<keyword id="KW-0808">Transferase</keyword>